<evidence type="ECO:0000255" key="1">
    <source>
        <dbReference type="HAMAP-Rule" id="MF_00056"/>
    </source>
</evidence>
<accession>Q6MEB3</accession>
<dbReference type="EC" id="2.5.1.55" evidence="1"/>
<dbReference type="EMBL" id="BX908798">
    <property type="protein sequence ID" value="CAF23086.1"/>
    <property type="molecule type" value="Genomic_DNA"/>
</dbReference>
<dbReference type="RefSeq" id="WP_011174912.1">
    <property type="nucleotide sequence ID" value="NC_005861.2"/>
</dbReference>
<dbReference type="SMR" id="Q6MEB3"/>
<dbReference type="STRING" id="264201.pc0362"/>
<dbReference type="KEGG" id="pcu:PC_RS01780"/>
<dbReference type="eggNOG" id="COG2877">
    <property type="taxonomic scope" value="Bacteria"/>
</dbReference>
<dbReference type="HOGENOM" id="CLU_036666_0_0_0"/>
<dbReference type="OrthoDB" id="9780456at2"/>
<dbReference type="UniPathway" id="UPA00030"/>
<dbReference type="UniPathway" id="UPA00357">
    <property type="reaction ID" value="UER00474"/>
</dbReference>
<dbReference type="Proteomes" id="UP000000529">
    <property type="component" value="Chromosome"/>
</dbReference>
<dbReference type="GO" id="GO:0005737">
    <property type="term" value="C:cytoplasm"/>
    <property type="evidence" value="ECO:0007669"/>
    <property type="project" value="UniProtKB-SubCell"/>
</dbReference>
<dbReference type="GO" id="GO:0008676">
    <property type="term" value="F:3-deoxy-8-phosphooctulonate synthase activity"/>
    <property type="evidence" value="ECO:0007669"/>
    <property type="project" value="UniProtKB-UniRule"/>
</dbReference>
<dbReference type="GO" id="GO:0019294">
    <property type="term" value="P:keto-3-deoxy-D-manno-octulosonic acid biosynthetic process"/>
    <property type="evidence" value="ECO:0007669"/>
    <property type="project" value="UniProtKB-UniRule"/>
</dbReference>
<dbReference type="Gene3D" id="3.20.20.70">
    <property type="entry name" value="Aldolase class I"/>
    <property type="match status" value="1"/>
</dbReference>
<dbReference type="HAMAP" id="MF_00056">
    <property type="entry name" value="KDO8P_synth"/>
    <property type="match status" value="1"/>
</dbReference>
<dbReference type="InterPro" id="IPR013785">
    <property type="entry name" value="Aldolase_TIM"/>
</dbReference>
<dbReference type="InterPro" id="IPR006218">
    <property type="entry name" value="DAHP1/KDSA"/>
</dbReference>
<dbReference type="InterPro" id="IPR006269">
    <property type="entry name" value="KDO8P_synthase"/>
</dbReference>
<dbReference type="NCBIfam" id="TIGR01362">
    <property type="entry name" value="KDO8P_synth"/>
    <property type="match status" value="1"/>
</dbReference>
<dbReference type="NCBIfam" id="NF003543">
    <property type="entry name" value="PRK05198.1"/>
    <property type="match status" value="1"/>
</dbReference>
<dbReference type="PANTHER" id="PTHR21057">
    <property type="entry name" value="PHOSPHO-2-DEHYDRO-3-DEOXYHEPTONATE ALDOLASE"/>
    <property type="match status" value="1"/>
</dbReference>
<dbReference type="Pfam" id="PF00793">
    <property type="entry name" value="DAHP_synth_1"/>
    <property type="match status" value="1"/>
</dbReference>
<dbReference type="SUPFAM" id="SSF51569">
    <property type="entry name" value="Aldolase"/>
    <property type="match status" value="1"/>
</dbReference>
<feature type="chain" id="PRO_0000187144" description="2-dehydro-3-deoxyphosphooctonate aldolase">
    <location>
        <begin position="1"/>
        <end position="275"/>
    </location>
</feature>
<proteinExistence type="inferred from homology"/>
<gene>
    <name evidence="1" type="primary">kdsA</name>
    <name type="ordered locus">pc0362</name>
</gene>
<protein>
    <recommendedName>
        <fullName evidence="1">2-dehydro-3-deoxyphosphooctonate aldolase</fullName>
        <ecNumber evidence="1">2.5.1.55</ecNumber>
    </recommendedName>
    <alternativeName>
        <fullName evidence="1">3-deoxy-D-manno-octulosonic acid 8-phosphate synthase</fullName>
    </alternativeName>
    <alternativeName>
        <fullName evidence="1">KDO-8-phosphate synthase</fullName>
        <shortName evidence="1">KDO 8-P synthase</shortName>
        <shortName evidence="1">KDOPS</shortName>
    </alternativeName>
    <alternativeName>
        <fullName evidence="1">Phospho-2-dehydro-3-deoxyoctonate aldolase</fullName>
    </alternativeName>
</protein>
<keyword id="KW-0963">Cytoplasm</keyword>
<keyword id="KW-0448">Lipopolysaccharide biosynthesis</keyword>
<keyword id="KW-1185">Reference proteome</keyword>
<keyword id="KW-0808">Transferase</keyword>
<comment type="catalytic activity">
    <reaction evidence="1">
        <text>D-arabinose 5-phosphate + phosphoenolpyruvate + H2O = 3-deoxy-alpha-D-manno-2-octulosonate-8-phosphate + phosphate</text>
        <dbReference type="Rhea" id="RHEA:14053"/>
        <dbReference type="ChEBI" id="CHEBI:15377"/>
        <dbReference type="ChEBI" id="CHEBI:43474"/>
        <dbReference type="ChEBI" id="CHEBI:57693"/>
        <dbReference type="ChEBI" id="CHEBI:58702"/>
        <dbReference type="ChEBI" id="CHEBI:85985"/>
        <dbReference type="EC" id="2.5.1.55"/>
    </reaction>
</comment>
<comment type="pathway">
    <text evidence="1">Carbohydrate biosynthesis; 3-deoxy-D-manno-octulosonate biosynthesis; 3-deoxy-D-manno-octulosonate from D-ribulose 5-phosphate: step 2/3.</text>
</comment>
<comment type="pathway">
    <text evidence="1">Bacterial outer membrane biogenesis; lipopolysaccharide biosynthesis.</text>
</comment>
<comment type="subcellular location">
    <subcellularLocation>
        <location evidence="1">Cytoplasm</location>
    </subcellularLocation>
</comment>
<comment type="similarity">
    <text evidence="1">Belongs to the KdsA family.</text>
</comment>
<sequence>MRRIVVKDFAIGPKEPLVIMSGPCVIESETHCLKAAETLKNMFEKYNVSLIFKSSYDKANRSAYDSFRGPGLEEGLRILERIQKEFGLAVVTDVHSPQEATTAGSVCEIIQIPAFLCRQTDLILAAAQTGAIVSIKKGQFLAPWDMENVIRKMESGGNSNIILVDRGTTFGYNNLISDMRGIPIMQELGYPVCFDATHSVQKPGGLGSKSGGDREFIPILAKAALAAGANCLFIESHPNPSEAKSDAASVMDFKDLDQLLPQFKELYELIQKQGK</sequence>
<reference key="1">
    <citation type="journal article" date="2004" name="Science">
        <title>Illuminating the evolutionary history of chlamydiae.</title>
        <authorList>
            <person name="Horn M."/>
            <person name="Collingro A."/>
            <person name="Schmitz-Esser S."/>
            <person name="Beier C.L."/>
            <person name="Purkhold U."/>
            <person name="Fartmann B."/>
            <person name="Brandt P."/>
            <person name="Nyakatura G.J."/>
            <person name="Droege M."/>
            <person name="Frishman D."/>
            <person name="Rattei T."/>
            <person name="Mewes H.-W."/>
            <person name="Wagner M."/>
        </authorList>
    </citation>
    <scope>NUCLEOTIDE SEQUENCE [LARGE SCALE GENOMIC DNA]</scope>
    <source>
        <strain>UWE25</strain>
    </source>
</reference>
<name>KDSA_PARUW</name>
<organism>
    <name type="scientific">Protochlamydia amoebophila (strain UWE25)</name>
    <dbReference type="NCBI Taxonomy" id="264201"/>
    <lineage>
        <taxon>Bacteria</taxon>
        <taxon>Pseudomonadati</taxon>
        <taxon>Chlamydiota</taxon>
        <taxon>Chlamydiia</taxon>
        <taxon>Parachlamydiales</taxon>
        <taxon>Parachlamydiaceae</taxon>
        <taxon>Candidatus Protochlamydia</taxon>
    </lineage>
</organism>